<accession>Q8XW36</accession>
<organism>
    <name type="scientific">Ralstonia nicotianae (strain ATCC BAA-1114 / GMI1000)</name>
    <name type="common">Ralstonia solanacearum</name>
    <dbReference type="NCBI Taxonomy" id="267608"/>
    <lineage>
        <taxon>Bacteria</taxon>
        <taxon>Pseudomonadati</taxon>
        <taxon>Pseudomonadota</taxon>
        <taxon>Betaproteobacteria</taxon>
        <taxon>Burkholderiales</taxon>
        <taxon>Burkholderiaceae</taxon>
        <taxon>Ralstonia</taxon>
        <taxon>Ralstonia solanacearum species complex</taxon>
    </lineage>
</organism>
<dbReference type="EMBL" id="AL646052">
    <property type="protein sequence ID" value="CAD16346.1"/>
    <property type="molecule type" value="Genomic_DNA"/>
</dbReference>
<dbReference type="RefSeq" id="WP_011002549.1">
    <property type="nucleotide sequence ID" value="NC_003295.1"/>
</dbReference>
<dbReference type="SMR" id="Q8XW36"/>
<dbReference type="STRING" id="267608.RSc2639"/>
<dbReference type="EnsemblBacteria" id="CAD16346">
    <property type="protein sequence ID" value="CAD16346"/>
    <property type="gene ID" value="RSc2639"/>
</dbReference>
<dbReference type="KEGG" id="rso:RSc2639"/>
<dbReference type="eggNOG" id="COG0576">
    <property type="taxonomic scope" value="Bacteria"/>
</dbReference>
<dbReference type="HOGENOM" id="CLU_057217_6_1_4"/>
<dbReference type="Proteomes" id="UP000001436">
    <property type="component" value="Chromosome"/>
</dbReference>
<dbReference type="GO" id="GO:0005829">
    <property type="term" value="C:cytosol"/>
    <property type="evidence" value="ECO:0007669"/>
    <property type="project" value="TreeGrafter"/>
</dbReference>
<dbReference type="GO" id="GO:0000774">
    <property type="term" value="F:adenyl-nucleotide exchange factor activity"/>
    <property type="evidence" value="ECO:0007669"/>
    <property type="project" value="InterPro"/>
</dbReference>
<dbReference type="GO" id="GO:0042803">
    <property type="term" value="F:protein homodimerization activity"/>
    <property type="evidence" value="ECO:0007669"/>
    <property type="project" value="InterPro"/>
</dbReference>
<dbReference type="GO" id="GO:0051087">
    <property type="term" value="F:protein-folding chaperone binding"/>
    <property type="evidence" value="ECO:0007669"/>
    <property type="project" value="InterPro"/>
</dbReference>
<dbReference type="GO" id="GO:0051082">
    <property type="term" value="F:unfolded protein binding"/>
    <property type="evidence" value="ECO:0007669"/>
    <property type="project" value="TreeGrafter"/>
</dbReference>
<dbReference type="GO" id="GO:0006457">
    <property type="term" value="P:protein folding"/>
    <property type="evidence" value="ECO:0007669"/>
    <property type="project" value="InterPro"/>
</dbReference>
<dbReference type="CDD" id="cd00446">
    <property type="entry name" value="GrpE"/>
    <property type="match status" value="1"/>
</dbReference>
<dbReference type="FunFam" id="2.30.22.10:FF:000001">
    <property type="entry name" value="Protein GrpE"/>
    <property type="match status" value="1"/>
</dbReference>
<dbReference type="Gene3D" id="3.90.20.20">
    <property type="match status" value="1"/>
</dbReference>
<dbReference type="Gene3D" id="2.30.22.10">
    <property type="entry name" value="Head domain of nucleotide exchange factor GrpE"/>
    <property type="match status" value="1"/>
</dbReference>
<dbReference type="HAMAP" id="MF_01151">
    <property type="entry name" value="GrpE"/>
    <property type="match status" value="1"/>
</dbReference>
<dbReference type="InterPro" id="IPR000740">
    <property type="entry name" value="GrpE"/>
</dbReference>
<dbReference type="InterPro" id="IPR013805">
    <property type="entry name" value="GrpE_coiled_coil"/>
</dbReference>
<dbReference type="InterPro" id="IPR009012">
    <property type="entry name" value="GrpE_head"/>
</dbReference>
<dbReference type="NCBIfam" id="NF010737">
    <property type="entry name" value="PRK14139.1"/>
    <property type="match status" value="1"/>
</dbReference>
<dbReference type="NCBIfam" id="NF010738">
    <property type="entry name" value="PRK14140.1"/>
    <property type="match status" value="1"/>
</dbReference>
<dbReference type="NCBIfam" id="NF010748">
    <property type="entry name" value="PRK14150.1"/>
    <property type="match status" value="1"/>
</dbReference>
<dbReference type="PANTHER" id="PTHR21237">
    <property type="entry name" value="GRPE PROTEIN"/>
    <property type="match status" value="1"/>
</dbReference>
<dbReference type="PANTHER" id="PTHR21237:SF23">
    <property type="entry name" value="GRPE PROTEIN HOMOLOG, MITOCHONDRIAL"/>
    <property type="match status" value="1"/>
</dbReference>
<dbReference type="Pfam" id="PF01025">
    <property type="entry name" value="GrpE"/>
    <property type="match status" value="1"/>
</dbReference>
<dbReference type="PRINTS" id="PR00773">
    <property type="entry name" value="GRPEPROTEIN"/>
</dbReference>
<dbReference type="SUPFAM" id="SSF58014">
    <property type="entry name" value="Coiled-coil domain of nucleotide exchange factor GrpE"/>
    <property type="match status" value="1"/>
</dbReference>
<dbReference type="SUPFAM" id="SSF51064">
    <property type="entry name" value="Head domain of nucleotide exchange factor GrpE"/>
    <property type="match status" value="1"/>
</dbReference>
<dbReference type="PROSITE" id="PS01071">
    <property type="entry name" value="GRPE"/>
    <property type="match status" value="1"/>
</dbReference>
<sequence>MKHTSEPTSQPDTQAAESAQSSAAAAGQAASAYSSQAQRASADAQAIAGDEAAVAEATIEPDTAELRRQLEAADEKARQNYENWARAVAEGENIRRRAQDDVARAHKFAIEGFAEYLLPVMDSLQAALADASGDVAKLREGVELTLKQLNAAFEKGRVTELNPVGEKFDPHRHQAISMVPADQEANTVVNVLQRGYTLADRVLRPALVTVAAPK</sequence>
<gene>
    <name evidence="1" type="primary">grpE</name>
    <name type="ordered locus">RSc2639</name>
    <name type="ORF">RS04582</name>
</gene>
<comment type="function">
    <text evidence="1">Participates actively in the response to hyperosmotic and heat shock by preventing the aggregation of stress-denatured proteins, in association with DnaK and GrpE. It is the nucleotide exchange factor for DnaK and may function as a thermosensor. Unfolded proteins bind initially to DnaJ; upon interaction with the DnaJ-bound protein, DnaK hydrolyzes its bound ATP, resulting in the formation of a stable complex. GrpE releases ADP from DnaK; ATP binding to DnaK triggers the release of the substrate protein, thus completing the reaction cycle. Several rounds of ATP-dependent interactions between DnaJ, DnaK and GrpE are required for fully efficient folding.</text>
</comment>
<comment type="subunit">
    <text evidence="1">Homodimer.</text>
</comment>
<comment type="subcellular location">
    <subcellularLocation>
        <location evidence="1">Cytoplasm</location>
    </subcellularLocation>
</comment>
<comment type="similarity">
    <text evidence="1">Belongs to the GrpE family.</text>
</comment>
<name>GRPE_RALN1</name>
<evidence type="ECO:0000255" key="1">
    <source>
        <dbReference type="HAMAP-Rule" id="MF_01151"/>
    </source>
</evidence>
<evidence type="ECO:0000256" key="2">
    <source>
        <dbReference type="SAM" id="MobiDB-lite"/>
    </source>
</evidence>
<proteinExistence type="inferred from homology"/>
<protein>
    <recommendedName>
        <fullName evidence="1">Protein GrpE</fullName>
    </recommendedName>
    <alternativeName>
        <fullName evidence="1">HSP-70 cofactor</fullName>
    </alternativeName>
</protein>
<reference key="1">
    <citation type="journal article" date="2002" name="Nature">
        <title>Genome sequence of the plant pathogen Ralstonia solanacearum.</title>
        <authorList>
            <person name="Salanoubat M."/>
            <person name="Genin S."/>
            <person name="Artiguenave F."/>
            <person name="Gouzy J."/>
            <person name="Mangenot S."/>
            <person name="Arlat M."/>
            <person name="Billault A."/>
            <person name="Brottier P."/>
            <person name="Camus J.-C."/>
            <person name="Cattolico L."/>
            <person name="Chandler M."/>
            <person name="Choisne N."/>
            <person name="Claudel-Renard C."/>
            <person name="Cunnac S."/>
            <person name="Demange N."/>
            <person name="Gaspin C."/>
            <person name="Lavie M."/>
            <person name="Moisan A."/>
            <person name="Robert C."/>
            <person name="Saurin W."/>
            <person name="Schiex T."/>
            <person name="Siguier P."/>
            <person name="Thebault P."/>
            <person name="Whalen M."/>
            <person name="Wincker P."/>
            <person name="Levy M."/>
            <person name="Weissenbach J."/>
            <person name="Boucher C.A."/>
        </authorList>
    </citation>
    <scope>NUCLEOTIDE SEQUENCE [LARGE SCALE GENOMIC DNA]</scope>
    <source>
        <strain>ATCC BAA-1114 / GMI1000</strain>
    </source>
</reference>
<keyword id="KW-0143">Chaperone</keyword>
<keyword id="KW-0963">Cytoplasm</keyword>
<keyword id="KW-1185">Reference proteome</keyword>
<keyword id="KW-0346">Stress response</keyword>
<feature type="chain" id="PRO_0000113843" description="Protein GrpE">
    <location>
        <begin position="1"/>
        <end position="214"/>
    </location>
</feature>
<feature type="region of interest" description="Disordered" evidence="2">
    <location>
        <begin position="1"/>
        <end position="61"/>
    </location>
</feature>
<feature type="compositionally biased region" description="Polar residues" evidence="2">
    <location>
        <begin position="1"/>
        <end position="13"/>
    </location>
</feature>
<feature type="compositionally biased region" description="Low complexity" evidence="2">
    <location>
        <begin position="14"/>
        <end position="57"/>
    </location>
</feature>